<protein>
    <recommendedName>
        <fullName evidence="1">N-succinylarginine dihydrolase</fullName>
        <ecNumber evidence="1">3.5.3.23</ecNumber>
    </recommendedName>
</protein>
<gene>
    <name evidence="1" type="primary">astB</name>
    <name type="ordered locus">ETA_18560</name>
</gene>
<organism>
    <name type="scientific">Erwinia tasmaniensis (strain DSM 17950 / CFBP 7177 / CIP 109463 / NCPPB 4357 / Et1/99)</name>
    <dbReference type="NCBI Taxonomy" id="465817"/>
    <lineage>
        <taxon>Bacteria</taxon>
        <taxon>Pseudomonadati</taxon>
        <taxon>Pseudomonadota</taxon>
        <taxon>Gammaproteobacteria</taxon>
        <taxon>Enterobacterales</taxon>
        <taxon>Erwiniaceae</taxon>
        <taxon>Erwinia</taxon>
    </lineage>
</organism>
<sequence length="441" mass="48288">MSAREVNFDGLPGLTHHYAGLSFGNEASARHQHQVSNPKLAALQGLKKMKTLADLGYAQGVIPPHERPNIEALRQLGFSGSDAQVLAQAAKQAPKLLSAVSSASAMWVANAATVSPSVDSRDGRVHLTVANLNNKYHRSIEAPTTAALLRAIFRDDEHFSVHDALPQVALFGDEGAANHNRFSNGYGEPGVQLFVYGCAQAGGIRPLHYPARQTREASEAVARLNQLDAARTLYAQQDPVVIDAGVFHNDVIAVSNQQTLFCHQRAFLNQPQLMARLAQKVPGFNLIEVPDERVSVADAVATYLFNSQLLSKDNGKMLLILPEEARRHAGVWRWLTEMVAGDGTIDELKVLDLRESMCNGGGPACLRLRVVLNAQQQAAVNPAVMMNETLYATLCGWVERHYRDRLSQADLADPQLLSEGREALDELTKLLDLGHVYRFQQ</sequence>
<reference key="1">
    <citation type="journal article" date="2008" name="Environ. Microbiol.">
        <title>The genome of Erwinia tasmaniensis strain Et1/99, a non-pathogenic bacterium in the genus Erwinia.</title>
        <authorList>
            <person name="Kube M."/>
            <person name="Migdoll A.M."/>
            <person name="Mueller I."/>
            <person name="Kuhl H."/>
            <person name="Beck A."/>
            <person name="Reinhardt R."/>
            <person name="Geider K."/>
        </authorList>
    </citation>
    <scope>NUCLEOTIDE SEQUENCE [LARGE SCALE GENOMIC DNA]</scope>
    <source>
        <strain>DSM 17950 / CFBP 7177 / CIP 109463 / NCPPB 4357 / Et1/99</strain>
    </source>
</reference>
<keyword id="KW-0056">Arginine metabolism</keyword>
<keyword id="KW-0378">Hydrolase</keyword>
<keyword id="KW-1185">Reference proteome</keyword>
<name>ASTB_ERWT9</name>
<accession>B2VEK6</accession>
<proteinExistence type="inferred from homology"/>
<dbReference type="EC" id="3.5.3.23" evidence="1"/>
<dbReference type="EMBL" id="CU468135">
    <property type="protein sequence ID" value="CAO96902.1"/>
    <property type="molecule type" value="Genomic_DNA"/>
</dbReference>
<dbReference type="RefSeq" id="WP_012441586.1">
    <property type="nucleotide sequence ID" value="NC_010694.1"/>
</dbReference>
<dbReference type="SMR" id="B2VEK6"/>
<dbReference type="STRING" id="465817.ETA_18560"/>
<dbReference type="KEGG" id="eta:ETA_18560"/>
<dbReference type="eggNOG" id="COG3724">
    <property type="taxonomic scope" value="Bacteria"/>
</dbReference>
<dbReference type="HOGENOM" id="CLU_053835_0_0_6"/>
<dbReference type="OrthoDB" id="248552at2"/>
<dbReference type="UniPathway" id="UPA00185">
    <property type="reaction ID" value="UER00280"/>
</dbReference>
<dbReference type="Proteomes" id="UP000001726">
    <property type="component" value="Chromosome"/>
</dbReference>
<dbReference type="GO" id="GO:0009015">
    <property type="term" value="F:N-succinylarginine dihydrolase activity"/>
    <property type="evidence" value="ECO:0007669"/>
    <property type="project" value="UniProtKB-UniRule"/>
</dbReference>
<dbReference type="GO" id="GO:0019544">
    <property type="term" value="P:arginine catabolic process to glutamate"/>
    <property type="evidence" value="ECO:0007669"/>
    <property type="project" value="UniProtKB-UniRule"/>
</dbReference>
<dbReference type="GO" id="GO:0019545">
    <property type="term" value="P:arginine catabolic process to succinate"/>
    <property type="evidence" value="ECO:0007669"/>
    <property type="project" value="UniProtKB-UniRule"/>
</dbReference>
<dbReference type="Gene3D" id="3.75.10.20">
    <property type="entry name" value="Succinylarginine dihydrolase"/>
    <property type="match status" value="1"/>
</dbReference>
<dbReference type="HAMAP" id="MF_01172">
    <property type="entry name" value="AstB"/>
    <property type="match status" value="1"/>
</dbReference>
<dbReference type="InterPro" id="IPR037031">
    <property type="entry name" value="AstB_sf"/>
</dbReference>
<dbReference type="InterPro" id="IPR007079">
    <property type="entry name" value="SuccinylArg_d-Hdrlase_AstB"/>
</dbReference>
<dbReference type="NCBIfam" id="TIGR03241">
    <property type="entry name" value="arg_catab_astB"/>
    <property type="match status" value="1"/>
</dbReference>
<dbReference type="NCBIfam" id="NF009789">
    <property type="entry name" value="PRK13281.1"/>
    <property type="match status" value="1"/>
</dbReference>
<dbReference type="PANTHER" id="PTHR30420">
    <property type="entry name" value="N-SUCCINYLARGININE DIHYDROLASE"/>
    <property type="match status" value="1"/>
</dbReference>
<dbReference type="PANTHER" id="PTHR30420:SF2">
    <property type="entry name" value="N-SUCCINYLARGININE DIHYDROLASE"/>
    <property type="match status" value="1"/>
</dbReference>
<dbReference type="Pfam" id="PF04996">
    <property type="entry name" value="AstB"/>
    <property type="match status" value="1"/>
</dbReference>
<dbReference type="SUPFAM" id="SSF55909">
    <property type="entry name" value="Pentein"/>
    <property type="match status" value="1"/>
</dbReference>
<feature type="chain" id="PRO_1000138017" description="N-succinylarginine dihydrolase">
    <location>
        <begin position="1"/>
        <end position="441"/>
    </location>
</feature>
<feature type="active site" evidence="1">
    <location>
        <position position="174"/>
    </location>
</feature>
<feature type="active site" evidence="1">
    <location>
        <position position="248"/>
    </location>
</feature>
<feature type="active site" description="Nucleophile" evidence="1">
    <location>
        <position position="365"/>
    </location>
</feature>
<feature type="binding site" evidence="1">
    <location>
        <begin position="19"/>
        <end position="28"/>
    </location>
    <ligand>
        <name>substrate</name>
    </ligand>
</feature>
<feature type="binding site" evidence="1">
    <location>
        <position position="110"/>
    </location>
    <ligand>
        <name>substrate</name>
    </ligand>
</feature>
<feature type="binding site" evidence="1">
    <location>
        <begin position="137"/>
        <end position="138"/>
    </location>
    <ligand>
        <name>substrate</name>
    </ligand>
</feature>
<feature type="binding site" evidence="1">
    <location>
        <position position="212"/>
    </location>
    <ligand>
        <name>substrate</name>
    </ligand>
</feature>
<feature type="binding site" evidence="1">
    <location>
        <position position="250"/>
    </location>
    <ligand>
        <name>substrate</name>
    </ligand>
</feature>
<feature type="binding site" evidence="1">
    <location>
        <position position="359"/>
    </location>
    <ligand>
        <name>substrate</name>
    </ligand>
</feature>
<evidence type="ECO:0000255" key="1">
    <source>
        <dbReference type="HAMAP-Rule" id="MF_01172"/>
    </source>
</evidence>
<comment type="function">
    <text evidence="1">Catalyzes the hydrolysis of N(2)-succinylarginine into N(2)-succinylornithine, ammonia and CO(2).</text>
</comment>
<comment type="catalytic activity">
    <reaction evidence="1">
        <text>N(2)-succinyl-L-arginine + 2 H2O + 2 H(+) = N(2)-succinyl-L-ornithine + 2 NH4(+) + CO2</text>
        <dbReference type="Rhea" id="RHEA:19533"/>
        <dbReference type="ChEBI" id="CHEBI:15377"/>
        <dbReference type="ChEBI" id="CHEBI:15378"/>
        <dbReference type="ChEBI" id="CHEBI:16526"/>
        <dbReference type="ChEBI" id="CHEBI:28938"/>
        <dbReference type="ChEBI" id="CHEBI:58241"/>
        <dbReference type="ChEBI" id="CHEBI:58514"/>
        <dbReference type="EC" id="3.5.3.23"/>
    </reaction>
</comment>
<comment type="pathway">
    <text evidence="1">Amino-acid degradation; L-arginine degradation via AST pathway; L-glutamate and succinate from L-arginine: step 2/5.</text>
</comment>
<comment type="subunit">
    <text evidence="1">Homodimer.</text>
</comment>
<comment type="similarity">
    <text evidence="1">Belongs to the succinylarginine dihydrolase family.</text>
</comment>